<gene>
    <name evidence="1" type="primary">pth</name>
    <name type="ordered locus">CAB788</name>
</gene>
<dbReference type="EC" id="3.1.1.29" evidence="1"/>
<dbReference type="EMBL" id="CR848038">
    <property type="protein sequence ID" value="CAH64230.1"/>
    <property type="molecule type" value="Genomic_DNA"/>
</dbReference>
<dbReference type="RefSeq" id="WP_006344394.1">
    <property type="nucleotide sequence ID" value="NC_004552.2"/>
</dbReference>
<dbReference type="SMR" id="Q5L564"/>
<dbReference type="GeneID" id="93024340"/>
<dbReference type="KEGG" id="cab:CAB788"/>
<dbReference type="eggNOG" id="COG0193">
    <property type="taxonomic scope" value="Bacteria"/>
</dbReference>
<dbReference type="HOGENOM" id="CLU_062456_4_2_0"/>
<dbReference type="OrthoDB" id="9800507at2"/>
<dbReference type="Proteomes" id="UP000001012">
    <property type="component" value="Chromosome"/>
</dbReference>
<dbReference type="GO" id="GO:0005737">
    <property type="term" value="C:cytoplasm"/>
    <property type="evidence" value="ECO:0007669"/>
    <property type="project" value="UniProtKB-SubCell"/>
</dbReference>
<dbReference type="GO" id="GO:0004045">
    <property type="term" value="F:peptidyl-tRNA hydrolase activity"/>
    <property type="evidence" value="ECO:0007669"/>
    <property type="project" value="UniProtKB-UniRule"/>
</dbReference>
<dbReference type="GO" id="GO:0000049">
    <property type="term" value="F:tRNA binding"/>
    <property type="evidence" value="ECO:0007669"/>
    <property type="project" value="UniProtKB-UniRule"/>
</dbReference>
<dbReference type="GO" id="GO:0006515">
    <property type="term" value="P:protein quality control for misfolded or incompletely synthesized proteins"/>
    <property type="evidence" value="ECO:0007669"/>
    <property type="project" value="UniProtKB-UniRule"/>
</dbReference>
<dbReference type="GO" id="GO:0072344">
    <property type="term" value="P:rescue of stalled ribosome"/>
    <property type="evidence" value="ECO:0007669"/>
    <property type="project" value="UniProtKB-UniRule"/>
</dbReference>
<dbReference type="CDD" id="cd00462">
    <property type="entry name" value="PTH"/>
    <property type="match status" value="1"/>
</dbReference>
<dbReference type="Gene3D" id="3.40.50.1470">
    <property type="entry name" value="Peptidyl-tRNA hydrolase"/>
    <property type="match status" value="1"/>
</dbReference>
<dbReference type="HAMAP" id="MF_00083">
    <property type="entry name" value="Pept_tRNA_hydro_bact"/>
    <property type="match status" value="1"/>
</dbReference>
<dbReference type="InterPro" id="IPR001328">
    <property type="entry name" value="Pept_tRNA_hydro"/>
</dbReference>
<dbReference type="InterPro" id="IPR018171">
    <property type="entry name" value="Pept_tRNA_hydro_CS"/>
</dbReference>
<dbReference type="InterPro" id="IPR036416">
    <property type="entry name" value="Pept_tRNA_hydro_sf"/>
</dbReference>
<dbReference type="NCBIfam" id="TIGR00447">
    <property type="entry name" value="pth"/>
    <property type="match status" value="1"/>
</dbReference>
<dbReference type="PANTHER" id="PTHR17224">
    <property type="entry name" value="PEPTIDYL-TRNA HYDROLASE"/>
    <property type="match status" value="1"/>
</dbReference>
<dbReference type="PANTHER" id="PTHR17224:SF1">
    <property type="entry name" value="PEPTIDYL-TRNA HYDROLASE"/>
    <property type="match status" value="1"/>
</dbReference>
<dbReference type="Pfam" id="PF01195">
    <property type="entry name" value="Pept_tRNA_hydro"/>
    <property type="match status" value="1"/>
</dbReference>
<dbReference type="SUPFAM" id="SSF53178">
    <property type="entry name" value="Peptidyl-tRNA hydrolase-like"/>
    <property type="match status" value="1"/>
</dbReference>
<dbReference type="PROSITE" id="PS01195">
    <property type="entry name" value="PEPT_TRNA_HYDROL_1"/>
    <property type="match status" value="1"/>
</dbReference>
<accession>Q5L564</accession>
<evidence type="ECO:0000255" key="1">
    <source>
        <dbReference type="HAMAP-Rule" id="MF_00083"/>
    </source>
</evidence>
<protein>
    <recommendedName>
        <fullName evidence="1">Peptidyl-tRNA hydrolase</fullName>
        <shortName evidence="1">Pth</shortName>
        <ecNumber evidence="1">3.1.1.29</ecNumber>
    </recommendedName>
</protein>
<organism>
    <name type="scientific">Chlamydia abortus (strain DSM 27085 / S26/3)</name>
    <name type="common">Chlamydophila abortus</name>
    <dbReference type="NCBI Taxonomy" id="218497"/>
    <lineage>
        <taxon>Bacteria</taxon>
        <taxon>Pseudomonadati</taxon>
        <taxon>Chlamydiota</taxon>
        <taxon>Chlamydiia</taxon>
        <taxon>Chlamydiales</taxon>
        <taxon>Chlamydiaceae</taxon>
        <taxon>Chlamydia/Chlamydophila group</taxon>
        <taxon>Chlamydia</taxon>
    </lineage>
</organism>
<keyword id="KW-0963">Cytoplasm</keyword>
<keyword id="KW-0378">Hydrolase</keyword>
<keyword id="KW-0694">RNA-binding</keyword>
<keyword id="KW-0820">tRNA-binding</keyword>
<reference key="1">
    <citation type="journal article" date="2005" name="Genome Res.">
        <title>The Chlamydophila abortus genome sequence reveals an array of variable proteins that contribute to interspecies variation.</title>
        <authorList>
            <person name="Thomson N.R."/>
            <person name="Yeats C."/>
            <person name="Bell K."/>
            <person name="Holden M.T.G."/>
            <person name="Bentley S.D."/>
            <person name="Livingstone M."/>
            <person name="Cerdeno-Tarraga A.-M."/>
            <person name="Harris B."/>
            <person name="Doggett J."/>
            <person name="Ormond D."/>
            <person name="Mungall K."/>
            <person name="Clarke K."/>
            <person name="Feltwell T."/>
            <person name="Hance Z."/>
            <person name="Sanders M."/>
            <person name="Quail M.A."/>
            <person name="Price C."/>
            <person name="Barrell B.G."/>
            <person name="Parkhill J."/>
            <person name="Longbottom D."/>
        </authorList>
    </citation>
    <scope>NUCLEOTIDE SEQUENCE [LARGE SCALE GENOMIC DNA]</scope>
    <source>
        <strain>DSM 27085 / S26/3</strain>
    </source>
</reference>
<proteinExistence type="inferred from homology"/>
<sequence length="183" mass="20167">MTSLVVAIGNPGRQYVWTRHNVGFLCVDRLVQQFPGVHFKEAPKLFSDIAKVESSQGSMVFIKPRTYVNLSGKAVLAVKGYYNIATDRILVIADDVNQPFGNVRLRQSAGGGGHKGIKSITQSLGSNDYWQLRLGIGRPQRENVELSDFVLGQFTEEEQIGIQSVFIEASALFSQWCSGTQTA</sequence>
<comment type="function">
    <text evidence="1">Hydrolyzes ribosome-free peptidyl-tRNAs (with 1 or more amino acids incorporated), which drop off the ribosome during protein synthesis, or as a result of ribosome stalling.</text>
</comment>
<comment type="function">
    <text evidence="1">Catalyzes the release of premature peptidyl moieties from peptidyl-tRNA molecules trapped in stalled 50S ribosomal subunits, and thus maintains levels of free tRNAs and 50S ribosomes.</text>
</comment>
<comment type="catalytic activity">
    <reaction evidence="1">
        <text>an N-acyl-L-alpha-aminoacyl-tRNA + H2O = an N-acyl-L-amino acid + a tRNA + H(+)</text>
        <dbReference type="Rhea" id="RHEA:54448"/>
        <dbReference type="Rhea" id="RHEA-COMP:10123"/>
        <dbReference type="Rhea" id="RHEA-COMP:13883"/>
        <dbReference type="ChEBI" id="CHEBI:15377"/>
        <dbReference type="ChEBI" id="CHEBI:15378"/>
        <dbReference type="ChEBI" id="CHEBI:59874"/>
        <dbReference type="ChEBI" id="CHEBI:78442"/>
        <dbReference type="ChEBI" id="CHEBI:138191"/>
        <dbReference type="EC" id="3.1.1.29"/>
    </reaction>
</comment>
<comment type="subunit">
    <text evidence="1">Monomer.</text>
</comment>
<comment type="subcellular location">
    <subcellularLocation>
        <location evidence="1">Cytoplasm</location>
    </subcellularLocation>
</comment>
<comment type="similarity">
    <text evidence="1">Belongs to the PTH family.</text>
</comment>
<feature type="chain" id="PRO_0000264017" description="Peptidyl-tRNA hydrolase">
    <location>
        <begin position="1"/>
        <end position="183"/>
    </location>
</feature>
<feature type="active site" description="Proton acceptor" evidence="1">
    <location>
        <position position="20"/>
    </location>
</feature>
<feature type="binding site" evidence="1">
    <location>
        <position position="15"/>
    </location>
    <ligand>
        <name>tRNA</name>
        <dbReference type="ChEBI" id="CHEBI:17843"/>
    </ligand>
</feature>
<feature type="binding site" evidence="1">
    <location>
        <position position="67"/>
    </location>
    <ligand>
        <name>tRNA</name>
        <dbReference type="ChEBI" id="CHEBI:17843"/>
    </ligand>
</feature>
<feature type="binding site" evidence="1">
    <location>
        <position position="69"/>
    </location>
    <ligand>
        <name>tRNA</name>
        <dbReference type="ChEBI" id="CHEBI:17843"/>
    </ligand>
</feature>
<feature type="site" description="Discriminates between blocked and unblocked aminoacyl-tRNA" evidence="1">
    <location>
        <position position="10"/>
    </location>
</feature>
<feature type="site" description="Stabilizes the basic form of H active site to accept a proton" evidence="1">
    <location>
        <position position="94"/>
    </location>
</feature>
<name>PTH_CHLAB</name>